<sequence>MSNIVLSISTNIQKEVMAYYAANYIERKAAGVIFAAKLPDTSITMYKSGKLMFQGGGAEREAARWGTIEKTPNSKSAIIGAKGDTLPDQFALMSVLGSDETGTGDYFGPMTVAAVYVPSSKIELINELGVKDSKMLSDDYMRKIAPDLRAACVHSVLILRNEKYNSLQAKGYSQGKMKAMMHNKALHNTLAKMAPETPEYILIDQFAERGVYYNYLKNEREIVQESVYFSTKAEQLHVAVATASILARAAFLKEMDRLSDIAGLELMKGASNKVDVQAARIWRKQGEEFLRSITKWHFANTEKARKMI</sequence>
<keyword id="KW-0963">Cytoplasm</keyword>
<keyword id="KW-0255">Endonuclease</keyword>
<keyword id="KW-0378">Hydrolase</keyword>
<keyword id="KW-0460">Magnesium</keyword>
<keyword id="KW-0479">Metal-binding</keyword>
<keyword id="KW-0540">Nuclease</keyword>
<name>RNH3_LYSSC</name>
<evidence type="ECO:0000255" key="1">
    <source>
        <dbReference type="HAMAP-Rule" id="MF_00053"/>
    </source>
</evidence>
<evidence type="ECO:0000255" key="2">
    <source>
        <dbReference type="PROSITE-ProRule" id="PRU01319"/>
    </source>
</evidence>
<protein>
    <recommendedName>
        <fullName evidence="1">Ribonuclease HIII</fullName>
        <shortName evidence="1">RNase HIII</shortName>
        <ecNumber evidence="1">3.1.26.4</ecNumber>
    </recommendedName>
</protein>
<dbReference type="EC" id="3.1.26.4" evidence="1"/>
<dbReference type="EMBL" id="CP000817">
    <property type="protein sequence ID" value="ACA41538.1"/>
    <property type="molecule type" value="Genomic_DNA"/>
</dbReference>
<dbReference type="RefSeq" id="WP_012295576.1">
    <property type="nucleotide sequence ID" value="NC_010382.1"/>
</dbReference>
<dbReference type="SMR" id="B1HW99"/>
<dbReference type="EnsemblBacteria" id="ACA41538">
    <property type="protein sequence ID" value="ACA41538"/>
    <property type="gene ID" value="Bsph_4070"/>
</dbReference>
<dbReference type="KEGG" id="lsp:Bsph_4070"/>
<dbReference type="HOGENOM" id="CLU_059546_1_0_9"/>
<dbReference type="Proteomes" id="UP000002164">
    <property type="component" value="Chromosome"/>
</dbReference>
<dbReference type="GO" id="GO:0005737">
    <property type="term" value="C:cytoplasm"/>
    <property type="evidence" value="ECO:0007669"/>
    <property type="project" value="UniProtKB-SubCell"/>
</dbReference>
<dbReference type="GO" id="GO:0032299">
    <property type="term" value="C:ribonuclease H2 complex"/>
    <property type="evidence" value="ECO:0007669"/>
    <property type="project" value="TreeGrafter"/>
</dbReference>
<dbReference type="GO" id="GO:0000287">
    <property type="term" value="F:magnesium ion binding"/>
    <property type="evidence" value="ECO:0007669"/>
    <property type="project" value="UniProtKB-UniRule"/>
</dbReference>
<dbReference type="GO" id="GO:0003723">
    <property type="term" value="F:RNA binding"/>
    <property type="evidence" value="ECO:0007669"/>
    <property type="project" value="InterPro"/>
</dbReference>
<dbReference type="GO" id="GO:0004523">
    <property type="term" value="F:RNA-DNA hybrid ribonuclease activity"/>
    <property type="evidence" value="ECO:0007669"/>
    <property type="project" value="UniProtKB-UniRule"/>
</dbReference>
<dbReference type="GO" id="GO:0043137">
    <property type="term" value="P:DNA replication, removal of RNA primer"/>
    <property type="evidence" value="ECO:0007669"/>
    <property type="project" value="TreeGrafter"/>
</dbReference>
<dbReference type="GO" id="GO:0006298">
    <property type="term" value="P:mismatch repair"/>
    <property type="evidence" value="ECO:0007669"/>
    <property type="project" value="TreeGrafter"/>
</dbReference>
<dbReference type="CDD" id="cd06590">
    <property type="entry name" value="RNase_HII_bacteria_HIII_like"/>
    <property type="match status" value="1"/>
</dbReference>
<dbReference type="CDD" id="cd14796">
    <property type="entry name" value="RNAse_HIII_N"/>
    <property type="match status" value="1"/>
</dbReference>
<dbReference type="FunFam" id="3.30.420.10:FF:000047">
    <property type="entry name" value="Ribonuclease HIII"/>
    <property type="match status" value="1"/>
</dbReference>
<dbReference type="Gene3D" id="3.30.420.10">
    <property type="entry name" value="Ribonuclease H-like superfamily/Ribonuclease H"/>
    <property type="match status" value="1"/>
</dbReference>
<dbReference type="Gene3D" id="3.30.310.10">
    <property type="entry name" value="TATA-Binding Protein"/>
    <property type="match status" value="1"/>
</dbReference>
<dbReference type="HAMAP" id="MF_00053">
    <property type="entry name" value="RNase_HIII"/>
    <property type="match status" value="1"/>
</dbReference>
<dbReference type="InterPro" id="IPR001352">
    <property type="entry name" value="RNase_HII/HIII"/>
</dbReference>
<dbReference type="InterPro" id="IPR024567">
    <property type="entry name" value="RNase_HII/HIII_dom"/>
</dbReference>
<dbReference type="InterPro" id="IPR004641">
    <property type="entry name" value="RNase_HIII"/>
</dbReference>
<dbReference type="InterPro" id="IPR024568">
    <property type="entry name" value="RNase_HIII_N"/>
</dbReference>
<dbReference type="InterPro" id="IPR012337">
    <property type="entry name" value="RNaseH-like_sf"/>
</dbReference>
<dbReference type="InterPro" id="IPR036397">
    <property type="entry name" value="RNaseH_sf"/>
</dbReference>
<dbReference type="InterPro" id="IPR012295">
    <property type="entry name" value="TBP_dom_sf"/>
</dbReference>
<dbReference type="NCBIfam" id="TIGR00716">
    <property type="entry name" value="rnhC"/>
    <property type="match status" value="1"/>
</dbReference>
<dbReference type="PANTHER" id="PTHR10954:SF23">
    <property type="entry name" value="RIBONUCLEASE"/>
    <property type="match status" value="1"/>
</dbReference>
<dbReference type="PANTHER" id="PTHR10954">
    <property type="entry name" value="RIBONUCLEASE H2 SUBUNIT A"/>
    <property type="match status" value="1"/>
</dbReference>
<dbReference type="Pfam" id="PF11858">
    <property type="entry name" value="DUF3378"/>
    <property type="match status" value="1"/>
</dbReference>
<dbReference type="Pfam" id="PF01351">
    <property type="entry name" value="RNase_HII"/>
    <property type="match status" value="1"/>
</dbReference>
<dbReference type="PIRSF" id="PIRSF037748">
    <property type="entry name" value="RnhC"/>
    <property type="match status" value="1"/>
</dbReference>
<dbReference type="SUPFAM" id="SSF53098">
    <property type="entry name" value="Ribonuclease H-like"/>
    <property type="match status" value="1"/>
</dbReference>
<dbReference type="PROSITE" id="PS51975">
    <property type="entry name" value="RNASE_H_2"/>
    <property type="match status" value="1"/>
</dbReference>
<comment type="function">
    <text evidence="1">Endonuclease that specifically degrades the RNA of RNA-DNA hybrids.</text>
</comment>
<comment type="catalytic activity">
    <reaction evidence="1">
        <text>Endonucleolytic cleavage to 5'-phosphomonoester.</text>
        <dbReference type="EC" id="3.1.26.4"/>
    </reaction>
</comment>
<comment type="cofactor">
    <cofactor evidence="1">
        <name>Mn(2+)</name>
        <dbReference type="ChEBI" id="CHEBI:29035"/>
    </cofactor>
    <cofactor evidence="1">
        <name>Mg(2+)</name>
        <dbReference type="ChEBI" id="CHEBI:18420"/>
    </cofactor>
    <text evidence="1">Manganese or magnesium. Binds 1 divalent metal ion per monomer in the absence of substrate. May bind a second metal ion after substrate binding.</text>
</comment>
<comment type="subcellular location">
    <subcellularLocation>
        <location evidence="1">Cytoplasm</location>
    </subcellularLocation>
</comment>
<comment type="similarity">
    <text evidence="1">Belongs to the RNase HII family. RnhC subfamily.</text>
</comment>
<feature type="chain" id="PRO_1000091679" description="Ribonuclease HIII">
    <location>
        <begin position="1"/>
        <end position="308"/>
    </location>
</feature>
<feature type="domain" description="RNase H type-2" evidence="2">
    <location>
        <begin position="93"/>
        <end position="308"/>
    </location>
</feature>
<feature type="binding site" evidence="1">
    <location>
        <position position="99"/>
    </location>
    <ligand>
        <name>a divalent metal cation</name>
        <dbReference type="ChEBI" id="CHEBI:60240"/>
    </ligand>
</feature>
<feature type="binding site" evidence="1">
    <location>
        <position position="100"/>
    </location>
    <ligand>
        <name>a divalent metal cation</name>
        <dbReference type="ChEBI" id="CHEBI:60240"/>
    </ligand>
</feature>
<feature type="binding site" evidence="1">
    <location>
        <position position="204"/>
    </location>
    <ligand>
        <name>a divalent metal cation</name>
        <dbReference type="ChEBI" id="CHEBI:60240"/>
    </ligand>
</feature>
<organism>
    <name type="scientific">Lysinibacillus sphaericus (strain C3-41)</name>
    <dbReference type="NCBI Taxonomy" id="444177"/>
    <lineage>
        <taxon>Bacteria</taxon>
        <taxon>Bacillati</taxon>
        <taxon>Bacillota</taxon>
        <taxon>Bacilli</taxon>
        <taxon>Bacillales</taxon>
        <taxon>Bacillaceae</taxon>
        <taxon>Lysinibacillus</taxon>
    </lineage>
</organism>
<gene>
    <name evidence="1" type="primary">rnhC</name>
    <name type="ordered locus">Bsph_4070</name>
</gene>
<proteinExistence type="inferred from homology"/>
<reference key="1">
    <citation type="journal article" date="2008" name="J. Bacteriol.">
        <title>Complete genome sequence of the mosquitocidal bacterium Bacillus sphaericus C3-41 and comparison with those of closely related Bacillus species.</title>
        <authorList>
            <person name="Hu X."/>
            <person name="Fan W."/>
            <person name="Han B."/>
            <person name="Liu H."/>
            <person name="Zheng D."/>
            <person name="Li Q."/>
            <person name="Dong W."/>
            <person name="Yan J."/>
            <person name="Gao M."/>
            <person name="Berry C."/>
            <person name="Yuan Z."/>
        </authorList>
    </citation>
    <scope>NUCLEOTIDE SEQUENCE [LARGE SCALE GENOMIC DNA]</scope>
    <source>
        <strain>C3-41</strain>
    </source>
</reference>
<accession>B1HW99</accession>